<organism>
    <name type="scientific">Burkholderia ambifaria (strain MC40-6)</name>
    <dbReference type="NCBI Taxonomy" id="398577"/>
    <lineage>
        <taxon>Bacteria</taxon>
        <taxon>Pseudomonadati</taxon>
        <taxon>Pseudomonadota</taxon>
        <taxon>Betaproteobacteria</taxon>
        <taxon>Burkholderiales</taxon>
        <taxon>Burkholderiaceae</taxon>
        <taxon>Burkholderia</taxon>
        <taxon>Burkholderia cepacia complex</taxon>
    </lineage>
</organism>
<proteinExistence type="inferred from homology"/>
<gene>
    <name evidence="1" type="primary">rpsI</name>
    <name type="ordered locus">BamMC406_0600</name>
</gene>
<comment type="similarity">
    <text evidence="1">Belongs to the universal ribosomal protein uS9 family.</text>
</comment>
<keyword id="KW-0687">Ribonucleoprotein</keyword>
<keyword id="KW-0689">Ribosomal protein</keyword>
<accession>B1YTD2</accession>
<name>RS9_BURA4</name>
<feature type="chain" id="PRO_1000128091" description="Small ribosomal subunit protein uS9">
    <location>
        <begin position="1"/>
        <end position="130"/>
    </location>
</feature>
<sequence>MIGNWNYGTGRRKSAVARVFIKAGKGDIIVNGKPIADYFSRETSLMIVRQPLELTNHGQTFDIKVNVTGGGETGQAGAVRHGITRALIDYDATLKPSLSTAGFVTRDAREVERKKVGLRKARRAKQFSKR</sequence>
<dbReference type="EMBL" id="CP001025">
    <property type="protein sequence ID" value="ACB63097.1"/>
    <property type="molecule type" value="Genomic_DNA"/>
</dbReference>
<dbReference type="RefSeq" id="WP_006751887.1">
    <property type="nucleotide sequence ID" value="NC_010551.1"/>
</dbReference>
<dbReference type="SMR" id="B1YTD2"/>
<dbReference type="GeneID" id="93084010"/>
<dbReference type="KEGG" id="bac:BamMC406_0600"/>
<dbReference type="HOGENOM" id="CLU_046483_2_1_4"/>
<dbReference type="OrthoDB" id="9803965at2"/>
<dbReference type="Proteomes" id="UP000001680">
    <property type="component" value="Chromosome 1"/>
</dbReference>
<dbReference type="GO" id="GO:0022627">
    <property type="term" value="C:cytosolic small ribosomal subunit"/>
    <property type="evidence" value="ECO:0007669"/>
    <property type="project" value="TreeGrafter"/>
</dbReference>
<dbReference type="GO" id="GO:0003723">
    <property type="term" value="F:RNA binding"/>
    <property type="evidence" value="ECO:0007669"/>
    <property type="project" value="TreeGrafter"/>
</dbReference>
<dbReference type="GO" id="GO:0003735">
    <property type="term" value="F:structural constituent of ribosome"/>
    <property type="evidence" value="ECO:0007669"/>
    <property type="project" value="InterPro"/>
</dbReference>
<dbReference type="GO" id="GO:0006412">
    <property type="term" value="P:translation"/>
    <property type="evidence" value="ECO:0007669"/>
    <property type="project" value="UniProtKB-UniRule"/>
</dbReference>
<dbReference type="FunFam" id="3.30.230.10:FF:000001">
    <property type="entry name" value="30S ribosomal protein S9"/>
    <property type="match status" value="1"/>
</dbReference>
<dbReference type="Gene3D" id="3.30.230.10">
    <property type="match status" value="1"/>
</dbReference>
<dbReference type="HAMAP" id="MF_00532_B">
    <property type="entry name" value="Ribosomal_uS9_B"/>
    <property type="match status" value="1"/>
</dbReference>
<dbReference type="InterPro" id="IPR020568">
    <property type="entry name" value="Ribosomal_Su5_D2-typ_SF"/>
</dbReference>
<dbReference type="InterPro" id="IPR000754">
    <property type="entry name" value="Ribosomal_uS9"/>
</dbReference>
<dbReference type="InterPro" id="IPR023035">
    <property type="entry name" value="Ribosomal_uS9_bac/plastid"/>
</dbReference>
<dbReference type="InterPro" id="IPR020574">
    <property type="entry name" value="Ribosomal_uS9_CS"/>
</dbReference>
<dbReference type="InterPro" id="IPR014721">
    <property type="entry name" value="Ribsml_uS5_D2-typ_fold_subgr"/>
</dbReference>
<dbReference type="NCBIfam" id="NF001099">
    <property type="entry name" value="PRK00132.1"/>
    <property type="match status" value="1"/>
</dbReference>
<dbReference type="PANTHER" id="PTHR21569">
    <property type="entry name" value="RIBOSOMAL PROTEIN S9"/>
    <property type="match status" value="1"/>
</dbReference>
<dbReference type="PANTHER" id="PTHR21569:SF1">
    <property type="entry name" value="SMALL RIBOSOMAL SUBUNIT PROTEIN US9M"/>
    <property type="match status" value="1"/>
</dbReference>
<dbReference type="Pfam" id="PF00380">
    <property type="entry name" value="Ribosomal_S9"/>
    <property type="match status" value="1"/>
</dbReference>
<dbReference type="SUPFAM" id="SSF54211">
    <property type="entry name" value="Ribosomal protein S5 domain 2-like"/>
    <property type="match status" value="1"/>
</dbReference>
<dbReference type="PROSITE" id="PS00360">
    <property type="entry name" value="RIBOSOMAL_S9"/>
    <property type="match status" value="1"/>
</dbReference>
<protein>
    <recommendedName>
        <fullName evidence="1">Small ribosomal subunit protein uS9</fullName>
    </recommendedName>
    <alternativeName>
        <fullName evidence="2">30S ribosomal protein S9</fullName>
    </alternativeName>
</protein>
<evidence type="ECO:0000255" key="1">
    <source>
        <dbReference type="HAMAP-Rule" id="MF_00532"/>
    </source>
</evidence>
<evidence type="ECO:0000305" key="2"/>
<reference key="1">
    <citation type="submission" date="2008-04" db="EMBL/GenBank/DDBJ databases">
        <title>Complete sequence of chromosome 1 of Burkholderia ambifaria MC40-6.</title>
        <authorList>
            <person name="Copeland A."/>
            <person name="Lucas S."/>
            <person name="Lapidus A."/>
            <person name="Glavina del Rio T."/>
            <person name="Dalin E."/>
            <person name="Tice H."/>
            <person name="Pitluck S."/>
            <person name="Chain P."/>
            <person name="Malfatti S."/>
            <person name="Shin M."/>
            <person name="Vergez L."/>
            <person name="Lang D."/>
            <person name="Schmutz J."/>
            <person name="Larimer F."/>
            <person name="Land M."/>
            <person name="Hauser L."/>
            <person name="Kyrpides N."/>
            <person name="Lykidis A."/>
            <person name="Ramette A."/>
            <person name="Konstantinidis K."/>
            <person name="Tiedje J."/>
            <person name="Richardson P."/>
        </authorList>
    </citation>
    <scope>NUCLEOTIDE SEQUENCE [LARGE SCALE GENOMIC DNA]</scope>
    <source>
        <strain>MC40-6</strain>
    </source>
</reference>